<gene>
    <name type="primary">KNG2</name>
</gene>
<protein>
    <recommendedName>
        <fullName>Kininogen-2</fullName>
    </recommendedName>
    <alternativeName>
        <fullName>Kininogen II</fullName>
    </alternativeName>
    <alternativeName>
        <fullName>Thiol proteinase inhibitor</fullName>
    </alternativeName>
    <component>
        <recommendedName>
            <fullName>Kininogen-2 heavy chain</fullName>
        </recommendedName>
    </component>
    <component>
        <recommendedName>
            <fullName>Bradykinin</fullName>
        </recommendedName>
        <alternativeName>
            <fullName>Kallidin I</fullName>
        </alternativeName>
    </component>
    <component>
        <recommendedName>
            <fullName>Lysyl-bradykinin</fullName>
        </recommendedName>
        <alternativeName>
            <fullName>Kallidin II</fullName>
        </alternativeName>
    </component>
    <component>
        <recommendedName>
            <fullName>Kininogen-2 light chain</fullName>
        </recommendedName>
    </component>
</protein>
<proteinExistence type="evidence at protein level"/>
<organism>
    <name type="scientific">Bos taurus</name>
    <name type="common">Bovine</name>
    <dbReference type="NCBI Taxonomy" id="9913"/>
    <lineage>
        <taxon>Eukaryota</taxon>
        <taxon>Metazoa</taxon>
        <taxon>Chordata</taxon>
        <taxon>Craniata</taxon>
        <taxon>Vertebrata</taxon>
        <taxon>Euteleostomi</taxon>
        <taxon>Mammalia</taxon>
        <taxon>Eutheria</taxon>
        <taxon>Laurasiatheria</taxon>
        <taxon>Artiodactyla</taxon>
        <taxon>Ruminantia</taxon>
        <taxon>Pecora</taxon>
        <taxon>Bovidae</taxon>
        <taxon>Bovinae</taxon>
        <taxon>Bos</taxon>
    </lineage>
</organism>
<feature type="signal peptide" evidence="4">
    <location>
        <begin position="1"/>
        <end position="18"/>
    </location>
</feature>
<feature type="chain" id="PRO_0000006680" description="Kininogen-2">
    <location>
        <begin position="19"/>
        <end position="619"/>
    </location>
</feature>
<feature type="chain" id="PRO_0000006681" description="Kininogen-2 heavy chain">
    <location>
        <begin position="19"/>
        <end position="376"/>
    </location>
</feature>
<feature type="peptide" id="PRO_0000006682" description="Lysyl-bradykinin" evidence="5">
    <location>
        <begin position="377"/>
        <end position="386"/>
    </location>
</feature>
<feature type="peptide" id="PRO_0000006683" description="Bradykinin" evidence="5">
    <location>
        <begin position="378"/>
        <end position="386"/>
    </location>
</feature>
<feature type="chain" id="PRO_0000006684" description="Kininogen-2 light chain">
    <location>
        <begin position="387"/>
        <end position="619"/>
    </location>
</feature>
<feature type="domain" description="Cystatin kininogen-type 1" evidence="2">
    <location>
        <begin position="27"/>
        <end position="131"/>
    </location>
</feature>
<feature type="domain" description="Cystatin kininogen-type 2" evidence="2">
    <location>
        <begin position="150"/>
        <end position="253"/>
    </location>
</feature>
<feature type="domain" description="Cystatin kininogen-type 3" evidence="2">
    <location>
        <begin position="270"/>
        <end position="373"/>
    </location>
</feature>
<feature type="region of interest" description="Disordered" evidence="3">
    <location>
        <begin position="394"/>
        <end position="495"/>
    </location>
</feature>
<feature type="compositionally biased region" description="Basic residues" evidence="3">
    <location>
        <begin position="442"/>
        <end position="490"/>
    </location>
</feature>
<feature type="site" description="Not glycosylated">
    <location>
        <position position="47"/>
    </location>
</feature>
<feature type="site" description="Cleavage; by kallikrein">
    <location>
        <begin position="376"/>
        <end position="377"/>
    </location>
</feature>
<feature type="site" description="Cleavage; by kallikrein">
    <location>
        <begin position="386"/>
        <end position="387"/>
    </location>
</feature>
<feature type="site" description="Cleavage; by kallikrein">
    <location>
        <begin position="496"/>
        <end position="497"/>
    </location>
</feature>
<feature type="modified residue" description="Pyrrolidone carboxylic acid" evidence="4">
    <location>
        <position position="19"/>
    </location>
</feature>
<feature type="modified residue" description="4-hydroxyproline" evidence="1">
    <location>
        <position position="380"/>
    </location>
</feature>
<feature type="glycosylation site" description="N-linked (GlcNAc...) asparagine" evidence="4">
    <location>
        <position position="87"/>
    </location>
</feature>
<feature type="glycosylation site" description="O-linked (GalNAc...) threonine; partial" evidence="4">
    <location>
        <position position="136"/>
    </location>
</feature>
<feature type="glycosylation site" description="N-linked (GlcNAc...) asparagine" evidence="4">
    <location>
        <position position="168"/>
    </location>
</feature>
<feature type="glycosylation site" description="N-linked (GlcNAc...) asparagine" evidence="4">
    <location>
        <position position="169"/>
    </location>
</feature>
<feature type="glycosylation site" description="N-linked (GlcNAc...) asparagine; partial" evidence="4">
    <location>
        <position position="197"/>
    </location>
</feature>
<feature type="glycosylation site" description="N-linked (GlcNAc...) asparagine" evidence="4">
    <location>
        <position position="204"/>
    </location>
</feature>
<feature type="glycosylation site" description="N-linked (GlcNAc...) asparagine" evidence="4">
    <location>
        <position position="280"/>
    </location>
</feature>
<feature type="glycosylation site" description="O-linked (GalNAc...) serine" evidence="6">
    <location>
        <position position="396"/>
    </location>
</feature>
<feature type="glycosylation site" description="O-linked (GalNAc...) threonine" evidence="6">
    <location>
        <position position="397"/>
    </location>
</feature>
<feature type="glycosylation site" description="O-linked (GalNAc...) threonine" evidence="6">
    <location>
        <position position="398"/>
    </location>
</feature>
<feature type="glycosylation site" description="O-linked (GalNAc...) serine" evidence="6">
    <location>
        <position position="400"/>
    </location>
</feature>
<feature type="glycosylation site" description="O-linked (GalNAc...) serine" evidence="6">
    <location>
        <position position="404"/>
    </location>
</feature>
<feature type="glycosylation site" description="O-linked (GalNAc...) serine" evidence="6">
    <location>
        <position position="510"/>
    </location>
</feature>
<feature type="glycosylation site" description="O-linked (GalNAc...) threonine" evidence="6">
    <location>
        <position position="518"/>
    </location>
</feature>
<feature type="glycosylation site" description="O-linked (GalNAc...) threonine" evidence="6">
    <location>
        <position position="522"/>
    </location>
</feature>
<feature type="glycosylation site" description="O-linked (GalNAc...) threonine" evidence="6">
    <location>
        <position position="534"/>
    </location>
</feature>
<feature type="glycosylation site" description="O-linked (GalNAc...) threonine" evidence="6">
    <location>
        <position position="546"/>
    </location>
</feature>
<feature type="glycosylation site" description="O-linked (GalNAc...) threonine" evidence="6">
    <location>
        <position position="551"/>
    </location>
</feature>
<feature type="glycosylation site" description="O-linked (GalNAc...) threonine" evidence="6">
    <location>
        <position position="568"/>
    </location>
</feature>
<feature type="disulfide bond" description="Interchain (between heavy and light chains)">
    <location>
        <begin position="27"/>
        <end position="589"/>
    </location>
</feature>
<feature type="disulfide bond">
    <location>
        <begin position="82"/>
        <end position="93"/>
    </location>
</feature>
<feature type="disulfide bond">
    <location>
        <begin position="106"/>
        <end position="125"/>
    </location>
</feature>
<feature type="disulfide bond">
    <location>
        <begin position="141"/>
        <end position="144"/>
    </location>
</feature>
<feature type="disulfide bond">
    <location>
        <begin position="205"/>
        <end position="217"/>
    </location>
</feature>
<feature type="disulfide bond">
    <location>
        <begin position="228"/>
        <end position="247"/>
    </location>
</feature>
<feature type="disulfide bond">
    <location>
        <begin position="261"/>
        <end position="264"/>
    </location>
</feature>
<feature type="disulfide bond">
    <location>
        <begin position="325"/>
        <end position="337"/>
    </location>
</feature>
<feature type="disulfide bond">
    <location>
        <begin position="348"/>
        <end position="367"/>
    </location>
</feature>
<feature type="splice variant" id="VSP_013564" description="In isoform LMW." evidence="7">
    <original>VSLPHSAMSPVQDEERDSGKEQGPTHGHGWDHGKQI</original>
    <variation>THVKSCEYKGRPQEAGAEPAPQGEVSLPAESPQLAR</variation>
    <location>
        <begin position="399"/>
        <end position="434"/>
    </location>
</feature>
<feature type="splice variant" id="VSP_013565" description="In isoform LMW." evidence="7">
    <location>
        <begin position="435"/>
        <end position="619"/>
    </location>
</feature>
<feature type="sequence variant">
    <original>T</original>
    <variation>P</variation>
    <location>
        <position position="398"/>
    </location>
</feature>
<feature type="sequence variant">
    <original>L</original>
    <variation>V</variation>
    <location>
        <position position="401"/>
    </location>
</feature>
<feature type="sequence variant">
    <original>H</original>
    <variation>K</variation>
    <location>
        <position position="454"/>
    </location>
</feature>
<name>KNG2_BOVIN</name>
<reference key="1">
    <citation type="journal article" date="1983" name="Nature">
        <title>A single gene for bovine high molecular weight and low molecular weight kininogens.</title>
        <authorList>
            <person name="Kitamura N."/>
            <person name="Takagaki Y."/>
            <person name="Furuto S."/>
            <person name="Tanaka T."/>
            <person name="Nawa H."/>
            <person name="Nakanishi S."/>
        </authorList>
    </citation>
    <scope>NUCLEOTIDE SEQUENCE [MRNA] (ISOFORM HMW)</scope>
</reference>
<reference key="2">
    <citation type="journal article" date="1983" name="Proc. Natl. Acad. Sci. U.S.A.">
        <title>Primary structures of bovine liver low molecular weight kininogen precursors and their two mRNAs.</title>
        <authorList>
            <person name="Nawa H."/>
            <person name="Kitamura N."/>
            <person name="Hirose T."/>
            <person name="Asai M."/>
            <person name="Inayama S."/>
            <person name="Nakanishi S."/>
        </authorList>
    </citation>
    <scope>NUCLEOTIDE SEQUENCE [MRNA] (ISOFORM LMW)</scope>
</reference>
<reference key="3">
    <citation type="journal article" date="1987" name="J. Biol. Chem.">
        <title>Bovine high molecular weight kininogen. The amino acid sequence, positions of carbohydrate chains and disulfide bridges in the heavy chain portion.</title>
        <authorList>
            <person name="Sueyoshi T."/>
            <person name="Miyata T."/>
            <person name="Hashimoto N."/>
            <person name="Kato H."/>
            <person name="Hayashida H."/>
            <person name="Miyata T."/>
            <person name="Iwanaga S."/>
        </authorList>
    </citation>
    <scope>PROTEIN SEQUENCE OF 19-376</scope>
    <scope>PYROGLUTAMATE FORMATION AT GLN-19</scope>
    <scope>GLYCOSYLATION AT ASN-87; THR-136; ASN-168; ASN-169; ASN-197; ASN-204 AND ASN-280</scope>
</reference>
<reference key="4">
    <citation type="journal article" date="1970" name="J. Biochem.">
        <title>Studies on the structure of bovine kininogen: cleavages of disulfide bonds and of methionyl bonds in kininogen-II.</title>
        <authorList>
            <person name="Kato H."/>
            <person name="Nagasawa S."/>
            <person name="Suzuki T."/>
        </authorList>
    </citation>
    <scope>PROTEIN SEQUENCE OF 376-391</scope>
</reference>
<reference key="5">
    <citation type="journal article" date="1976" name="J. Biochem.">
        <title>Primary structure of bovine plasma high-molecular-weight kininogen. The amino acid sequence of a glycopeptide portion (fragment 1) following the C-terminus ot the bradykinin moiety.</title>
        <authorList>
            <person name="Han Y.N."/>
            <person name="Kato H."/>
            <person name="Iwanaga S."/>
            <person name="Suzuki T."/>
        </authorList>
    </citation>
    <scope>PROTEIN SEQUENCE OF 387-455</scope>
</reference>
<reference key="6">
    <citation type="journal article" date="1975" name="J. Biochem.">
        <title>Studies on the primary structure of bovine high-molecular-weight kininogen. Amino acid sequence of a fragment ('histidine-rich peptide') released by plasma kallikrein.</title>
        <authorList>
            <person name="Han Y.N."/>
            <person name="Komiya M."/>
            <person name="Iwanaga S."/>
            <person name="Suzuki T."/>
        </authorList>
    </citation>
    <scope>PROTEIN SEQUENCE OF 456-496</scope>
</reference>
<reference key="7">
    <citation type="book" date="1979" name="Biological functions of Proteinases">
        <editorList>
            <person name="Tschesche H."/>
            <person name="Hotzer H."/>
        </editorList>
        <authorList>
            <person name="Iwanaga S."/>
            <person name="Kato H."/>
            <person name="Sugo T."/>
            <person name="Ikari N."/>
            <person name="Hasimoto N."/>
            <person name="Fuji S."/>
        </authorList>
    </citation>
    <scope>GLYCOSYLATION</scope>
</reference>
<keyword id="KW-0025">Alternative splicing</keyword>
<keyword id="KW-0094">Blood coagulation</keyword>
<keyword id="KW-0903">Direct protein sequencing</keyword>
<keyword id="KW-1015">Disulfide bond</keyword>
<keyword id="KW-0325">Glycoprotein</keyword>
<keyword id="KW-0356">Hemostasis</keyword>
<keyword id="KW-0379">Hydroxylation</keyword>
<keyword id="KW-0395">Inflammatory response</keyword>
<keyword id="KW-0646">Protease inhibitor</keyword>
<keyword id="KW-0873">Pyrrolidone carboxylic acid</keyword>
<keyword id="KW-1185">Reference proteome</keyword>
<keyword id="KW-0677">Repeat</keyword>
<keyword id="KW-0964">Secreted</keyword>
<keyword id="KW-0732">Signal</keyword>
<keyword id="KW-0789">Thiol protease inhibitor</keyword>
<keyword id="KW-0838">Vasoactive</keyword>
<keyword id="KW-0840">Vasodilator</keyword>
<dbReference type="EMBL" id="V01492">
    <property type="protein sequence ID" value="CAA24736.1"/>
    <property type="molecule type" value="mRNA"/>
</dbReference>
<dbReference type="EMBL" id="V00427">
    <property type="protein sequence ID" value="CAA23710.1"/>
    <property type="molecule type" value="mRNA"/>
</dbReference>
<dbReference type="PIR" id="A01282">
    <property type="entry name" value="KGBOH2"/>
</dbReference>
<dbReference type="PIR" id="A01284">
    <property type="entry name" value="KGBOL2"/>
</dbReference>
<dbReference type="RefSeq" id="NP_001106748.1">
    <molecule id="P01045-1"/>
    <property type="nucleotide sequence ID" value="NM_001113277.1"/>
</dbReference>
<dbReference type="SMR" id="P01045"/>
<dbReference type="FunCoup" id="P01045">
    <property type="interactions" value="130"/>
</dbReference>
<dbReference type="MEROPS" id="I25.016"/>
<dbReference type="MEROPS" id="I25.017"/>
<dbReference type="MEROPS" id="I25.950"/>
<dbReference type="GlyCosmos" id="P01045">
    <property type="glycosylation" value="19 sites, No reported glycans"/>
</dbReference>
<dbReference type="GlyGen" id="P01045">
    <property type="glycosylation" value="19 sites"/>
</dbReference>
<dbReference type="iPTMnet" id="P01045"/>
<dbReference type="PeptideAtlas" id="P01045"/>
<dbReference type="GeneID" id="280833"/>
<dbReference type="KEGG" id="bta:280833"/>
<dbReference type="CTD" id="3827"/>
<dbReference type="InParanoid" id="P01045"/>
<dbReference type="OrthoDB" id="9937817at2759"/>
<dbReference type="Proteomes" id="UP000009136">
    <property type="component" value="Unplaced"/>
</dbReference>
<dbReference type="GO" id="GO:0005576">
    <property type="term" value="C:extracellular region"/>
    <property type="evidence" value="ECO:0000318"/>
    <property type="project" value="GO_Central"/>
</dbReference>
<dbReference type="GO" id="GO:0004869">
    <property type="term" value="F:cysteine-type endopeptidase inhibitor activity"/>
    <property type="evidence" value="ECO:0000318"/>
    <property type="project" value="GO_Central"/>
</dbReference>
<dbReference type="GO" id="GO:0007596">
    <property type="term" value="P:blood coagulation"/>
    <property type="evidence" value="ECO:0007669"/>
    <property type="project" value="UniProtKB-KW"/>
</dbReference>
<dbReference type="GO" id="GO:0006954">
    <property type="term" value="P:inflammatory response"/>
    <property type="evidence" value="ECO:0007669"/>
    <property type="project" value="UniProtKB-KW"/>
</dbReference>
<dbReference type="GO" id="GO:0030195">
    <property type="term" value="P:negative regulation of blood coagulation"/>
    <property type="evidence" value="ECO:0000318"/>
    <property type="project" value="GO_Central"/>
</dbReference>
<dbReference type="GO" id="GO:0007162">
    <property type="term" value="P:negative regulation of cell adhesion"/>
    <property type="evidence" value="ECO:0000318"/>
    <property type="project" value="GO_Central"/>
</dbReference>
<dbReference type="GO" id="GO:0042311">
    <property type="term" value="P:vasodilation"/>
    <property type="evidence" value="ECO:0007669"/>
    <property type="project" value="UniProtKB-KW"/>
</dbReference>
<dbReference type="CDD" id="cd00042">
    <property type="entry name" value="CY"/>
    <property type="match status" value="3"/>
</dbReference>
<dbReference type="FunFam" id="3.10.450.10:FF:000002">
    <property type="entry name" value="Kininogen 1"/>
    <property type="match status" value="2"/>
</dbReference>
<dbReference type="FunFam" id="3.10.450.10:FF:000008">
    <property type="entry name" value="Kininogen 1"/>
    <property type="match status" value="1"/>
</dbReference>
<dbReference type="Gene3D" id="3.10.450.10">
    <property type="match status" value="3"/>
</dbReference>
<dbReference type="InterPro" id="IPR000010">
    <property type="entry name" value="Cystatin_dom"/>
</dbReference>
<dbReference type="InterPro" id="IPR046350">
    <property type="entry name" value="Cystatin_sf"/>
</dbReference>
<dbReference type="InterPro" id="IPR002395">
    <property type="entry name" value="Kininogen"/>
</dbReference>
<dbReference type="InterPro" id="IPR027358">
    <property type="entry name" value="Kininogen-type_cystatin_dom"/>
</dbReference>
<dbReference type="InterPro" id="IPR050735">
    <property type="entry name" value="Kininogen_Fetuin_HRG"/>
</dbReference>
<dbReference type="InterPro" id="IPR018073">
    <property type="entry name" value="Prot_inh_cystat_CS"/>
</dbReference>
<dbReference type="PANTHER" id="PTHR13814">
    <property type="entry name" value="FETUIN"/>
    <property type="match status" value="1"/>
</dbReference>
<dbReference type="PANTHER" id="PTHR13814:SF12">
    <property type="entry name" value="KININOGEN-1"/>
    <property type="match status" value="1"/>
</dbReference>
<dbReference type="Pfam" id="PF00031">
    <property type="entry name" value="Cystatin"/>
    <property type="match status" value="3"/>
</dbReference>
<dbReference type="PRINTS" id="PR00334">
    <property type="entry name" value="KININOGEN"/>
</dbReference>
<dbReference type="SMART" id="SM00043">
    <property type="entry name" value="CY"/>
    <property type="match status" value="3"/>
</dbReference>
<dbReference type="SUPFAM" id="SSF54403">
    <property type="entry name" value="Cystatin/monellin"/>
    <property type="match status" value="3"/>
</dbReference>
<dbReference type="PROSITE" id="PS00287">
    <property type="entry name" value="CYSTATIN"/>
    <property type="match status" value="2"/>
</dbReference>
<dbReference type="PROSITE" id="PS51647">
    <property type="entry name" value="CYSTATIN_KININOGEN"/>
    <property type="match status" value="3"/>
</dbReference>
<comment type="function">
    <text>(1) Kininogens are inhibitors of thiol proteases; (2) HMW-kininogen plays an important role in blood coagulation by helping to position optimally prekallikrein and factor XI next to factor XII; (3) HMW-kininogen inhibits the thrombin- and plasmin-induced aggregation of thrombocytes; (4) the active peptide bradykinin that is released from HMW-kininogen shows a variety of physiological effects: (4A) influence in smooth muscle contraction, (4B) induction of hypotension, (4C) natriuresis and diuresis, (4D) decrease in blood glucose level, (4E) it is a mediator of inflammation and causes (4E1) increase in vascular permeability, (4E2) stimulation of nociceptors (4E3) release of other mediators of inflammation (e.g. prostaglandins), (4F) it has a cardioprotective effect (directly via bradykinin action, indirectly via endothelium-derived relaxing factor action); (5) LMW-kininogen inhibits the aggregation of thrombocytes; (6) LMW-kininogen is in contrast to HMW-kininogen not involved in blood clotting.</text>
</comment>
<comment type="subcellular location">
    <subcellularLocation>
        <location>Secreted</location>
        <location>Extracellular space</location>
    </subcellularLocation>
</comment>
<comment type="alternative products">
    <event type="alternative splicing"/>
    <isoform>
        <id>P01045-1</id>
        <name>HMW</name>
        <sequence type="displayed"/>
    </isoform>
    <isoform>
        <id>P01045-2</id>
        <name>LMW</name>
        <sequence type="described" ref="VSP_013564 VSP_013565"/>
    </isoform>
</comment>
<comment type="tissue specificity">
    <text>Plasma.</text>
</comment>
<comment type="PTM">
    <text>Bradykinin is released from kininogen by plasma kallikrein.</text>
</comment>
<evidence type="ECO:0000250" key="1"/>
<evidence type="ECO:0000255" key="2">
    <source>
        <dbReference type="PROSITE-ProRule" id="PRU00979"/>
    </source>
</evidence>
<evidence type="ECO:0000256" key="3">
    <source>
        <dbReference type="SAM" id="MobiDB-lite"/>
    </source>
</evidence>
<evidence type="ECO:0000269" key="4">
    <source>
    </source>
</evidence>
<evidence type="ECO:0000269" key="5">
    <source>
    </source>
</evidence>
<evidence type="ECO:0000269" key="6">
    <source ref="7"/>
</evidence>
<evidence type="ECO:0000303" key="7">
    <source>
    </source>
</evidence>
<sequence length="619" mass="68710">MKLITILFLCSRLLPSLTQESSQEIDCNDQDVFKAVDAALTKYNSENKSGNQFVLYRITEVARMDNPDTFYSLKYQIKEGDCPFQSNKTWQDCDYKDSAQAATGQCTATVAKRGNMKFSVAIQTCLITPAEGPVVTAQYECLGCVHPISTKSPDLEPVLRYAIQYFNNNTSHSHLFDLKEVKRAQKQVVSGWNYEVNYSIAQTNCSKEEFSFLTPDCKSLSSGDTGECTDKAHVDVKLRISSFSQKCDLYPGEDFLPPMVCVGCPKPIPVDSPDLEEALNHSIAKLNAEHDGTFYFKIDTVKKATVQVVGGLKYSIVFIARETTCSKGSNEELTKSCEINIHGQILHCDANVYVVPWEEKVYPTVNCQPLGQTSLMKRPPGFSPFRSVQVMKTEGSTTVSLPHSAMSPVQDEERDSGKEQGPTHGHGWDHGKQIKLHGLGLGHKHKHDQGHGHHRSHGLGHGHQKQHGLGHGHKHGHGHGKHKNKGKNNGKHYDWRTPYLASSYEDSTTSSAQTQEKTEETTLSSLAQPGVAITFPDFQDSDLIATVMPNTLPPHTESDDDWIPDIQTEPNSLAFKLISDFPETTSPKCPSRPWKPVNGVNPTVEMKESHDFDLVDALL</sequence>
<accession>P01045</accession>
<accession>P01047</accession>